<name>ULAA_SHIFL</name>
<proteinExistence type="inferred from homology"/>
<dbReference type="EMBL" id="AE005674">
    <property type="protein sequence ID" value="AAN45765.1"/>
    <property type="status" value="ALT_INIT"/>
    <property type="molecule type" value="Genomic_DNA"/>
</dbReference>
<dbReference type="EMBL" id="AE014073">
    <property type="protein sequence ID" value="AAP19547.1"/>
    <property type="status" value="ALT_INIT"/>
    <property type="molecule type" value="Genomic_DNA"/>
</dbReference>
<dbReference type="RefSeq" id="WP_005053825.1">
    <property type="nucleotide sequence ID" value="NZ_WPGW01000113.1"/>
</dbReference>
<dbReference type="SMR" id="Q83II9"/>
<dbReference type="STRING" id="198214.SF4348"/>
<dbReference type="PaxDb" id="198214-SF4348"/>
<dbReference type="KEGG" id="sfl:SF4348"/>
<dbReference type="KEGG" id="sfx:S4618"/>
<dbReference type="PATRIC" id="fig|198214.7.peg.5127"/>
<dbReference type="HOGENOM" id="CLU_031784_1_0_6"/>
<dbReference type="Proteomes" id="UP000001006">
    <property type="component" value="Chromosome"/>
</dbReference>
<dbReference type="Proteomes" id="UP000002673">
    <property type="component" value="Chromosome"/>
</dbReference>
<dbReference type="GO" id="GO:0005886">
    <property type="term" value="C:plasma membrane"/>
    <property type="evidence" value="ECO:0007669"/>
    <property type="project" value="UniProtKB-SubCell"/>
</dbReference>
<dbReference type="GO" id="GO:0009401">
    <property type="term" value="P:phosphoenolpyruvate-dependent sugar phosphotransferase system"/>
    <property type="evidence" value="ECO:0007669"/>
    <property type="project" value="UniProtKB-KW"/>
</dbReference>
<dbReference type="InterPro" id="IPR051562">
    <property type="entry name" value="Ascorbate-PTS_EIIC"/>
</dbReference>
<dbReference type="InterPro" id="IPR004703">
    <property type="entry name" value="PTS_sugar-sp_permease"/>
</dbReference>
<dbReference type="NCBIfam" id="NF006919">
    <property type="entry name" value="PRK09410.1-1"/>
    <property type="match status" value="1"/>
</dbReference>
<dbReference type="PANTHER" id="PTHR33843">
    <property type="entry name" value="ASCORBATE-SPECIFIC PTS SYSTEM EIIC COMPONENT"/>
    <property type="match status" value="1"/>
</dbReference>
<dbReference type="PANTHER" id="PTHR33843:SF4">
    <property type="entry name" value="ASCORBATE-SPECIFIC PTS SYSTEM EIIC COMPONENT"/>
    <property type="match status" value="1"/>
</dbReference>
<dbReference type="Pfam" id="PF03611">
    <property type="entry name" value="EIIC-GAT"/>
    <property type="match status" value="1"/>
</dbReference>
<evidence type="ECO:0000250" key="1">
    <source>
        <dbReference type="UniProtKB" id="P39301"/>
    </source>
</evidence>
<evidence type="ECO:0000305" key="2"/>
<keyword id="KW-0997">Cell inner membrane</keyword>
<keyword id="KW-1003">Cell membrane</keyword>
<keyword id="KW-0472">Membrane</keyword>
<keyword id="KW-0598">Phosphotransferase system</keyword>
<keyword id="KW-1185">Reference proteome</keyword>
<keyword id="KW-0762">Sugar transport</keyword>
<keyword id="KW-0812">Transmembrane</keyword>
<keyword id="KW-1133">Transmembrane helix</keyword>
<keyword id="KW-0813">Transport</keyword>
<organism>
    <name type="scientific">Shigella flexneri</name>
    <dbReference type="NCBI Taxonomy" id="623"/>
    <lineage>
        <taxon>Bacteria</taxon>
        <taxon>Pseudomonadati</taxon>
        <taxon>Pseudomonadota</taxon>
        <taxon>Gammaproteobacteria</taxon>
        <taxon>Enterobacterales</taxon>
        <taxon>Enterobacteriaceae</taxon>
        <taxon>Shigella</taxon>
    </lineage>
</organism>
<sequence>MEILYNIFTVFFNQVMTNAPLLLGIVTCLGYILLRKSVSVIIKGTIKTIIGFMLLQAGSGILTSTFKPVVAKMSEVYGINGAISDTYASMMATIDRMGDAYSWVGYAVLLALALNICYVLLRRITGIRTIMLTGHIMFQQAGLIAVTLFIFGYSMWTTIICTAILVSLYWGITSNMMYKPTQEVTDGCGFSIGHQQQFASLIAYKVAPFLGKKEESVEDLKLPGWLNIFHDNIVSTAIVMTIFFGAILLSFGIDTVQAMAGKVHWTVYILQTGFSFAVAIFIITQGVRMFVAELSEAFNGISQRLIPGAVLAIDCAAIYSFAPNAVVWGFMWGTIGQLIAVGILVACGSSILIIPGFIPMFFSNATIGVFANHFGGWRAALKICLVMGMIEIFGCVWVVKLTGMSAWMGMADWSILAPPMMQGFFSIGIAFMAVIIVIALAYMFFAGRALRAEEDAEKQLAEQSA</sequence>
<protein>
    <recommendedName>
        <fullName evidence="1">Ascorbate-specific PTS system EIIC component</fullName>
    </recommendedName>
    <alternativeName>
        <fullName evidence="1">Ascorbate-specific permease IIC component UlaA</fullName>
    </alternativeName>
</protein>
<feature type="chain" id="PRO_0000230663" description="Ascorbate-specific PTS system EIIC component">
    <location>
        <begin position="1"/>
        <end position="465"/>
    </location>
</feature>
<feature type="transmembrane region" description="Helical" evidence="1">
    <location>
        <begin position="14"/>
        <end position="34"/>
    </location>
</feature>
<feature type="transmembrane region" description="Helical" evidence="1">
    <location>
        <begin position="38"/>
        <end position="58"/>
    </location>
</feature>
<feature type="transmembrane region" description="Helical" evidence="1">
    <location>
        <begin position="101"/>
        <end position="121"/>
    </location>
</feature>
<feature type="transmembrane region" description="Helical" evidence="1">
    <location>
        <begin position="141"/>
        <end position="161"/>
    </location>
</feature>
<feature type="transmembrane region" description="Helical" evidence="1">
    <location>
        <begin position="233"/>
        <end position="253"/>
    </location>
</feature>
<feature type="transmembrane region" description="Helical" evidence="1">
    <location>
        <begin position="263"/>
        <end position="283"/>
    </location>
</feature>
<feature type="transmembrane region" description="Helical" evidence="1">
    <location>
        <begin position="316"/>
        <end position="336"/>
    </location>
</feature>
<feature type="transmembrane region" description="Helical" evidence="1">
    <location>
        <begin position="338"/>
        <end position="358"/>
    </location>
</feature>
<feature type="transmembrane region" description="Helical" evidence="1">
    <location>
        <begin position="379"/>
        <end position="399"/>
    </location>
</feature>
<feature type="transmembrane region" description="Helical" evidence="1">
    <location>
        <begin position="427"/>
        <end position="447"/>
    </location>
</feature>
<feature type="binding site" evidence="1">
    <location>
        <begin position="86"/>
        <end position="87"/>
    </location>
    <ligand>
        <name>L-ascorbate</name>
        <dbReference type="ChEBI" id="CHEBI:38290"/>
    </ligand>
</feature>
<feature type="binding site" evidence="1">
    <location>
        <begin position="135"/>
        <end position="139"/>
    </location>
    <ligand>
        <name>L-ascorbate</name>
        <dbReference type="ChEBI" id="CHEBI:38290"/>
    </ligand>
</feature>
<feature type="binding site" evidence="1">
    <location>
        <begin position="194"/>
        <end position="195"/>
    </location>
    <ligand>
        <name>L-ascorbate</name>
        <dbReference type="ChEBI" id="CHEBI:38290"/>
    </ligand>
</feature>
<feature type="binding site" evidence="1">
    <location>
        <position position="314"/>
    </location>
    <ligand>
        <name>L-ascorbate</name>
        <dbReference type="ChEBI" id="CHEBI:38290"/>
    </ligand>
</feature>
<gene>
    <name type="primary">ulaA</name>
    <name type="ordered locus">SF4348</name>
    <name type="ordered locus">S4618</name>
</gene>
<reference key="1">
    <citation type="journal article" date="2002" name="Nucleic Acids Res.">
        <title>Genome sequence of Shigella flexneri 2a: insights into pathogenicity through comparison with genomes of Escherichia coli K12 and O157.</title>
        <authorList>
            <person name="Jin Q."/>
            <person name="Yuan Z."/>
            <person name="Xu J."/>
            <person name="Wang Y."/>
            <person name="Shen Y."/>
            <person name="Lu W."/>
            <person name="Wang J."/>
            <person name="Liu H."/>
            <person name="Yang J."/>
            <person name="Yang F."/>
            <person name="Zhang X."/>
            <person name="Zhang J."/>
            <person name="Yang G."/>
            <person name="Wu H."/>
            <person name="Qu D."/>
            <person name="Dong J."/>
            <person name="Sun L."/>
            <person name="Xue Y."/>
            <person name="Zhao A."/>
            <person name="Gao Y."/>
            <person name="Zhu J."/>
            <person name="Kan B."/>
            <person name="Ding K."/>
            <person name="Chen S."/>
            <person name="Cheng H."/>
            <person name="Yao Z."/>
            <person name="He B."/>
            <person name="Chen R."/>
            <person name="Ma D."/>
            <person name="Qiang B."/>
            <person name="Wen Y."/>
            <person name="Hou Y."/>
            <person name="Yu J."/>
        </authorList>
    </citation>
    <scope>NUCLEOTIDE SEQUENCE [LARGE SCALE GENOMIC DNA]</scope>
    <source>
        <strain>301 / Serotype 2a</strain>
    </source>
</reference>
<reference key="2">
    <citation type="journal article" date="2003" name="Infect. Immun.">
        <title>Complete genome sequence and comparative genomics of Shigella flexneri serotype 2a strain 2457T.</title>
        <authorList>
            <person name="Wei J."/>
            <person name="Goldberg M.B."/>
            <person name="Burland V."/>
            <person name="Venkatesan M.M."/>
            <person name="Deng W."/>
            <person name="Fournier G."/>
            <person name="Mayhew G.F."/>
            <person name="Plunkett G. III"/>
            <person name="Rose D.J."/>
            <person name="Darling A."/>
            <person name="Mau B."/>
            <person name="Perna N.T."/>
            <person name="Payne S.M."/>
            <person name="Runyen-Janecky L.J."/>
            <person name="Zhou S."/>
            <person name="Schwartz D.C."/>
            <person name="Blattner F.R."/>
        </authorList>
    </citation>
    <scope>NUCLEOTIDE SEQUENCE [LARGE SCALE GENOMIC DNA]</scope>
    <source>
        <strain>ATCC 700930 / 2457T / Serotype 2a</strain>
    </source>
</reference>
<accession>Q83II9</accession>
<accession>Q7BYI6</accession>
<comment type="function">
    <text evidence="1">The phosphoenolpyruvate-dependent sugar phosphotransferase system (sugar PTS), a major carbohydrate active transport system, catalyzes the phosphorylation of incoming sugar substrates concomitantly with their translocation across the cell membrane. The enzyme II UlaABC PTS system is involved in ascorbate transport.</text>
</comment>
<comment type="subunit">
    <text evidence="1">Homodimer.</text>
</comment>
<comment type="subcellular location">
    <subcellularLocation>
        <location evidence="1">Cell inner membrane</location>
        <topology evidence="1">Multi-pass membrane protein</topology>
    </subcellularLocation>
</comment>
<comment type="induction">
    <text evidence="1">Induced by L-ascorbate. Repressed by UlaR.</text>
</comment>
<comment type="domain">
    <text evidence="1">In classical PTS systems, the PTS EIIC type-2 domain forms the translocation channel and contains the specific substrate-binding site. UlaA does not exhibit the topological features of any recognized enzyme IIC.</text>
</comment>
<comment type="similarity">
    <text evidence="2">Belongs to the UlaA family.</text>
</comment>
<comment type="sequence caution" evidence="2">
    <conflict type="erroneous initiation">
        <sequence resource="EMBL-CDS" id="AAN45765"/>
    </conflict>
</comment>
<comment type="sequence caution" evidence="2">
    <conflict type="erroneous initiation">
        <sequence resource="EMBL-CDS" id="AAP19547"/>
    </conflict>
</comment>